<organism>
    <name type="scientific">Salmonella typhi</name>
    <dbReference type="NCBI Taxonomy" id="90370"/>
    <lineage>
        <taxon>Bacteria</taxon>
        <taxon>Pseudomonadati</taxon>
        <taxon>Pseudomonadota</taxon>
        <taxon>Gammaproteobacteria</taxon>
        <taxon>Enterobacterales</taxon>
        <taxon>Enterobacteriaceae</taxon>
        <taxon>Salmonella</taxon>
    </lineage>
</organism>
<gene>
    <name type="primary">tnpA1</name>
    <name type="ordered locus">STY0437</name>
    <name type="ordered locus">t2464</name>
</gene>
<gene>
    <name type="primary">tnpA2</name>
    <name type="ordered locus">STY1225</name>
    <name type="ordered locus">t1735</name>
</gene>
<gene>
    <name type="primary">tnpA3</name>
    <name type="ordered locus">STY1418</name>
    <name type="ordered locus">t1554</name>
</gene>
<gene>
    <name type="primary">tnpA4</name>
    <name type="ordered locus">STY1580</name>
</gene>
<gene>
    <name type="primary">tnpA5</name>
    <name type="ordered locus">STY1794</name>
    <name type="ordered locus">t1197</name>
</gene>
<gene>
    <name type="primary">tnpA6</name>
    <name type="ordered locus">STY1844</name>
    <name type="ordered locus">t1154</name>
</gene>
<gene>
    <name type="primary">tnpA7</name>
    <name type="ordered locus">STY1895</name>
    <name type="ordered locus">t1105</name>
</gene>
<gene>
    <name type="primary">tnpA8</name>
    <name type="ordered locus">STY2497</name>
</gene>
<gene>
    <name type="primary">tnpA9</name>
    <name type="ordered locus">STY2640</name>
    <name type="ordered locus">t0456</name>
</gene>
<gene>
    <name type="primary">tnpA10</name>
    <name type="ordered locus">STY3140</name>
    <name type="ordered locus">t2909</name>
</gene>
<gene>
    <name type="primary">tnpA11</name>
    <name type="ordered locus">STY3154</name>
    <name type="ordered locus">t2920</name>
</gene>
<gene>
    <name type="primary">tnpA12</name>
    <name type="ordered locus">STY3234</name>
    <name type="ordered locus">t2995</name>
</gene>
<gene>
    <name type="primary">tnpA13</name>
    <name type="ordered locus">STY3261</name>
    <name type="ordered locus">t3019</name>
</gene>
<gene>
    <name type="primary">tnpA14</name>
    <name type="ordered locus">STY4765</name>
    <name type="ordered locus">t4460</name>
</gene>
<gene>
    <name type="primary">tnpA15</name>
    <name type="ordered locus">t2258</name>
</gene>
<sequence length="152" mass="17958">MGDEKSLAHTRWNCKYHIVFAPKYRRQAFYGEKRRAVGSILRKLCEWKNVRILEAECCADHIHMLLEIPPKMSVSSFMGYLKGKSSLMLYEQFGDLKFKYRNREFWCRGYYVDTVGKNTAKIQDYIKHQLEEDKMGEQLSIPYPGSPFTGRK</sequence>
<protein>
    <recommendedName>
        <fullName>Transposase for insertion sequence element IS200</fullName>
    </recommendedName>
</protein>
<evidence type="ECO:0000250" key="1">
    <source>
        <dbReference type="UniProtKB" id="Q7DF83"/>
    </source>
</evidence>
<evidence type="ECO:0000305" key="2"/>
<proteinExistence type="inferred from homology"/>
<dbReference type="EMBL" id="Y09990">
    <property type="protein sequence ID" value="CAA71109.1"/>
    <property type="molecule type" value="Genomic_DNA"/>
</dbReference>
<dbReference type="EMBL" id="Y09991">
    <property type="protein sequence ID" value="CAA71111.1"/>
    <property type="molecule type" value="Genomic_DNA"/>
</dbReference>
<dbReference type="EMBL" id="AL513382">
    <property type="protein sequence ID" value="CAD08855.1"/>
    <property type="molecule type" value="Genomic_DNA"/>
</dbReference>
<dbReference type="EMBL" id="AL513382">
    <property type="protein sequence ID" value="CAD08309.1"/>
    <property type="molecule type" value="Genomic_DNA"/>
</dbReference>
<dbReference type="EMBL" id="AL513382">
    <property type="protein sequence ID" value="CAD01680.1"/>
    <property type="molecule type" value="Genomic_DNA"/>
</dbReference>
<dbReference type="EMBL" id="AL513382">
    <property type="protein sequence ID" value="CAD01828.1"/>
    <property type="molecule type" value="Genomic_DNA"/>
</dbReference>
<dbReference type="EMBL" id="AL513382">
    <property type="protein sequence ID" value="CAD02036.1"/>
    <property type="molecule type" value="Genomic_DNA"/>
</dbReference>
<dbReference type="EMBL" id="AL513382">
    <property type="protein sequence ID" value="CAD02079.1"/>
    <property type="molecule type" value="Genomic_DNA"/>
</dbReference>
<dbReference type="EMBL" id="AL513382">
    <property type="protein sequence ID" value="CAD02126.1"/>
    <property type="molecule type" value="Genomic_DNA"/>
</dbReference>
<dbReference type="EMBL" id="AL513382">
    <property type="protein sequence ID" value="CAD07503.1"/>
    <property type="molecule type" value="Genomic_DNA"/>
</dbReference>
<dbReference type="EMBL" id="AL513382">
    <property type="protein sequence ID" value="CAD07639.1"/>
    <property type="molecule type" value="Genomic_DNA"/>
</dbReference>
<dbReference type="EMBL" id="AL513382">
    <property type="protein sequence ID" value="CAD02825.1"/>
    <property type="molecule type" value="Genomic_DNA"/>
</dbReference>
<dbReference type="EMBL" id="AL513382">
    <property type="protein sequence ID" value="CAD02836.1"/>
    <property type="molecule type" value="Genomic_DNA"/>
</dbReference>
<dbReference type="EMBL" id="AL513382">
    <property type="protein sequence ID" value="CAD02907.1"/>
    <property type="molecule type" value="Genomic_DNA"/>
</dbReference>
<dbReference type="EMBL" id="AL513382">
    <property type="protein sequence ID" value="CAD02931.1"/>
    <property type="molecule type" value="Genomic_DNA"/>
</dbReference>
<dbReference type="EMBL" id="AL513382">
    <property type="protein sequence ID" value="CAD06886.1"/>
    <property type="molecule type" value="Genomic_DNA"/>
</dbReference>
<dbReference type="EMBL" id="AE014613">
    <property type="protein sequence ID" value="AAO68168.1"/>
    <property type="molecule type" value="Genomic_DNA"/>
</dbReference>
<dbReference type="EMBL" id="AE014613">
    <property type="protein sequence ID" value="AAO68768.1"/>
    <property type="molecule type" value="Genomic_DNA"/>
</dbReference>
<dbReference type="EMBL" id="AE014613">
    <property type="protein sequence ID" value="AAO68814.1"/>
    <property type="molecule type" value="Genomic_DNA"/>
</dbReference>
<dbReference type="EMBL" id="AE014613">
    <property type="protein sequence ID" value="AAO68853.1"/>
    <property type="molecule type" value="Genomic_DNA"/>
</dbReference>
<dbReference type="EMBL" id="AE014613">
    <property type="protein sequence ID" value="AAO69186.1"/>
    <property type="molecule type" value="Genomic_DNA"/>
</dbReference>
<dbReference type="EMBL" id="AE014613">
    <property type="protein sequence ID" value="AAO69359.1"/>
    <property type="molecule type" value="Genomic_DNA"/>
</dbReference>
<dbReference type="EMBL" id="AE014613">
    <property type="protein sequence ID" value="AAO69860.1"/>
    <property type="molecule type" value="Genomic_DNA"/>
</dbReference>
<dbReference type="EMBL" id="AE014613">
    <property type="protein sequence ID" value="AAO70054.1"/>
    <property type="molecule type" value="Genomic_DNA"/>
</dbReference>
<dbReference type="EMBL" id="AE014613">
    <property type="protein sequence ID" value="AAO70463.1"/>
    <property type="molecule type" value="Genomic_DNA"/>
</dbReference>
<dbReference type="EMBL" id="AE014613">
    <property type="protein sequence ID" value="AAO70474.1"/>
    <property type="molecule type" value="Genomic_DNA"/>
</dbReference>
<dbReference type="EMBL" id="AE014613">
    <property type="protein sequence ID" value="AAO70547.1"/>
    <property type="molecule type" value="Genomic_DNA"/>
</dbReference>
<dbReference type="EMBL" id="AE014613">
    <property type="protein sequence ID" value="AAO70571.1"/>
    <property type="molecule type" value="Genomic_DNA"/>
</dbReference>
<dbReference type="EMBL" id="AE014613">
    <property type="protein sequence ID" value="AAO71907.1"/>
    <property type="molecule type" value="Genomic_DNA"/>
</dbReference>
<dbReference type="RefSeq" id="NP_454994.1">
    <property type="nucleotide sequence ID" value="NC_003198.1"/>
</dbReference>
<dbReference type="RefSeq" id="NP_455678.1">
    <property type="nucleotide sequence ID" value="NC_003198.1"/>
</dbReference>
<dbReference type="RefSeq" id="NP_455853.1">
    <property type="nucleotide sequence ID" value="NC_003198.1"/>
</dbReference>
<dbReference type="RefSeq" id="NP_455994.1">
    <property type="nucleotide sequence ID" value="NC_003198.1"/>
</dbReference>
<dbReference type="RefSeq" id="NP_456194.1">
    <property type="nucleotide sequence ID" value="NC_003198.1"/>
</dbReference>
<dbReference type="RefSeq" id="NP_456235.1">
    <property type="nucleotide sequence ID" value="NC_003198.1"/>
</dbReference>
<dbReference type="RefSeq" id="NP_456281.1">
    <property type="nucleotide sequence ID" value="NC_003198.1"/>
</dbReference>
<dbReference type="RefSeq" id="NP_456816.1">
    <property type="nucleotide sequence ID" value="NC_003198.1"/>
</dbReference>
<dbReference type="RefSeq" id="NP_456944.1">
    <property type="nucleotide sequence ID" value="NC_003198.1"/>
</dbReference>
<dbReference type="RefSeq" id="NP_457394.1">
    <property type="nucleotide sequence ID" value="NC_003198.1"/>
</dbReference>
<dbReference type="RefSeq" id="NP_457405.1">
    <property type="nucleotide sequence ID" value="NC_003198.1"/>
</dbReference>
<dbReference type="RefSeq" id="NP_457475.1">
    <property type="nucleotide sequence ID" value="NC_003198.1"/>
</dbReference>
<dbReference type="RefSeq" id="NP_457499.1">
    <property type="nucleotide sequence ID" value="NC_003198.1"/>
</dbReference>
<dbReference type="RefSeq" id="NP_458843.1">
    <property type="nucleotide sequence ID" value="NC_003198.1"/>
</dbReference>
<dbReference type="SMR" id="P59697"/>
<dbReference type="STRING" id="220341.gene:17584460"/>
<dbReference type="KEGG" id="stt:t0456"/>
<dbReference type="KEGG" id="stt:t1105"/>
<dbReference type="KEGG" id="stt:t1154"/>
<dbReference type="KEGG" id="stt:t1197"/>
<dbReference type="KEGG" id="stt:t1554"/>
<dbReference type="KEGG" id="stt:t1735"/>
<dbReference type="KEGG" id="stt:t2258"/>
<dbReference type="KEGG" id="stt:t2464"/>
<dbReference type="KEGG" id="stt:t2909"/>
<dbReference type="KEGG" id="stt:t2920"/>
<dbReference type="KEGG" id="stt:t2995"/>
<dbReference type="KEGG" id="stt:t3019"/>
<dbReference type="KEGG" id="stt:t4460"/>
<dbReference type="KEGG" id="sty:STY0437"/>
<dbReference type="KEGG" id="sty:STY1225"/>
<dbReference type="KEGG" id="sty:STY1418"/>
<dbReference type="KEGG" id="sty:STY1580"/>
<dbReference type="KEGG" id="sty:STY1794"/>
<dbReference type="KEGG" id="sty:STY1844"/>
<dbReference type="KEGG" id="sty:STY1895"/>
<dbReference type="KEGG" id="sty:STY2497"/>
<dbReference type="KEGG" id="sty:STY2640"/>
<dbReference type="KEGG" id="sty:STY3140"/>
<dbReference type="KEGG" id="sty:STY3154"/>
<dbReference type="KEGG" id="sty:STY3234"/>
<dbReference type="KEGG" id="sty:STY3261"/>
<dbReference type="KEGG" id="sty:STY4765"/>
<dbReference type="PATRIC" id="fig|220341.7.peg.1226"/>
<dbReference type="eggNOG" id="COG1943">
    <property type="taxonomic scope" value="Bacteria"/>
</dbReference>
<dbReference type="HOGENOM" id="CLU_101320_0_0_6"/>
<dbReference type="OMA" id="YHIVWVP"/>
<dbReference type="OrthoDB" id="9798161at2"/>
<dbReference type="Proteomes" id="UP000000541">
    <property type="component" value="Chromosome"/>
</dbReference>
<dbReference type="Proteomes" id="UP000002670">
    <property type="component" value="Chromosome"/>
</dbReference>
<dbReference type="GO" id="GO:0003677">
    <property type="term" value="F:DNA binding"/>
    <property type="evidence" value="ECO:0007669"/>
    <property type="project" value="UniProtKB-KW"/>
</dbReference>
<dbReference type="GO" id="GO:0004519">
    <property type="term" value="F:endonuclease activity"/>
    <property type="evidence" value="ECO:0007669"/>
    <property type="project" value="UniProtKB-KW"/>
</dbReference>
<dbReference type="GO" id="GO:0046872">
    <property type="term" value="F:metal ion binding"/>
    <property type="evidence" value="ECO:0007669"/>
    <property type="project" value="UniProtKB-KW"/>
</dbReference>
<dbReference type="GO" id="GO:0004803">
    <property type="term" value="F:transposase activity"/>
    <property type="evidence" value="ECO:0007669"/>
    <property type="project" value="InterPro"/>
</dbReference>
<dbReference type="GO" id="GO:0006313">
    <property type="term" value="P:DNA transposition"/>
    <property type="evidence" value="ECO:0007669"/>
    <property type="project" value="InterPro"/>
</dbReference>
<dbReference type="Gene3D" id="3.30.70.1290">
    <property type="entry name" value="Transposase IS200-like"/>
    <property type="match status" value="1"/>
</dbReference>
<dbReference type="InterPro" id="IPR002686">
    <property type="entry name" value="Transposase_17"/>
</dbReference>
<dbReference type="InterPro" id="IPR036515">
    <property type="entry name" value="Transposase_17_sf"/>
</dbReference>
<dbReference type="NCBIfam" id="NF033573">
    <property type="entry name" value="transpos_IS200"/>
    <property type="match status" value="1"/>
</dbReference>
<dbReference type="PANTHER" id="PTHR33360">
    <property type="entry name" value="TRANSPOSASE FOR INSERTION SEQUENCE ELEMENT IS200"/>
    <property type="match status" value="1"/>
</dbReference>
<dbReference type="PANTHER" id="PTHR33360:SF2">
    <property type="entry name" value="TRANSPOSASE FOR INSERTION SEQUENCE ELEMENT IS200"/>
    <property type="match status" value="1"/>
</dbReference>
<dbReference type="Pfam" id="PF01797">
    <property type="entry name" value="Y1_Tnp"/>
    <property type="match status" value="1"/>
</dbReference>
<dbReference type="SMART" id="SM01321">
    <property type="entry name" value="Y1_Tnp"/>
    <property type="match status" value="1"/>
</dbReference>
<dbReference type="SUPFAM" id="SSF143422">
    <property type="entry name" value="Transposase IS200-like"/>
    <property type="match status" value="1"/>
</dbReference>
<feature type="chain" id="PRO_0000075489" description="Transposase for insertion sequence element IS200">
    <location>
        <begin position="1"/>
        <end position="152"/>
    </location>
</feature>
<feature type="active site" description="Nucleophile" evidence="1">
    <location>
        <position position="125"/>
    </location>
</feature>
<feature type="binding site" evidence="1">
    <location>
        <position position="61"/>
    </location>
    <ligand>
        <name>Mg(2+)</name>
        <dbReference type="ChEBI" id="CHEBI:18420"/>
    </ligand>
</feature>
<feature type="binding site" evidence="1">
    <location>
        <position position="63"/>
    </location>
    <ligand>
        <name>Mg(2+)</name>
        <dbReference type="ChEBI" id="CHEBI:18420"/>
    </ligand>
</feature>
<feature type="binding site" evidence="1">
    <location>
        <position position="129"/>
    </location>
    <ligand>
        <name>Mg(2+)</name>
        <dbReference type="ChEBI" id="CHEBI:18420"/>
    </ligand>
</feature>
<name>T200_SALTI</name>
<reference key="1">
    <citation type="submission" date="1998-01" db="EMBL/GenBank/DDBJ databases">
        <title>Analysis of IS200 insertion loci in Salmonella typhi.</title>
        <authorList>
            <person name="Plaschy B."/>
            <person name="Stanley J."/>
            <person name="Nicolet J."/>
            <person name="Burnens A.P."/>
        </authorList>
    </citation>
    <scope>NUCLEOTIDE SEQUENCE [GENOMIC DNA]</scope>
    <source>
        <strain>ATCC 700931 / Ty2</strain>
    </source>
</reference>
<reference key="2">
    <citation type="journal article" date="2001" name="Nature">
        <title>Complete genome sequence of a multiple drug resistant Salmonella enterica serovar Typhi CT18.</title>
        <authorList>
            <person name="Parkhill J."/>
            <person name="Dougan G."/>
            <person name="James K.D."/>
            <person name="Thomson N.R."/>
            <person name="Pickard D."/>
            <person name="Wain J."/>
            <person name="Churcher C.M."/>
            <person name="Mungall K.L."/>
            <person name="Bentley S.D."/>
            <person name="Holden M.T.G."/>
            <person name="Sebaihia M."/>
            <person name="Baker S."/>
            <person name="Basham D."/>
            <person name="Brooks K."/>
            <person name="Chillingworth T."/>
            <person name="Connerton P."/>
            <person name="Cronin A."/>
            <person name="Davis P."/>
            <person name="Davies R.M."/>
            <person name="Dowd L."/>
            <person name="White N."/>
            <person name="Farrar J."/>
            <person name="Feltwell T."/>
            <person name="Hamlin N."/>
            <person name="Haque A."/>
            <person name="Hien T.T."/>
            <person name="Holroyd S."/>
            <person name="Jagels K."/>
            <person name="Krogh A."/>
            <person name="Larsen T.S."/>
            <person name="Leather S."/>
            <person name="Moule S."/>
            <person name="O'Gaora P."/>
            <person name="Parry C."/>
            <person name="Quail M.A."/>
            <person name="Rutherford K.M."/>
            <person name="Simmonds M."/>
            <person name="Skelton J."/>
            <person name="Stevens K."/>
            <person name="Whitehead S."/>
            <person name="Barrell B.G."/>
        </authorList>
    </citation>
    <scope>NUCLEOTIDE SEQUENCE [LARGE SCALE GENOMIC DNA]</scope>
    <source>
        <strain>CT18</strain>
    </source>
</reference>
<reference key="3">
    <citation type="journal article" date="2003" name="J. Bacteriol.">
        <title>Comparative genomics of Salmonella enterica serovar Typhi strains Ty2 and CT18.</title>
        <authorList>
            <person name="Deng W."/>
            <person name="Liou S.-R."/>
            <person name="Plunkett G. III"/>
            <person name="Mayhew G.F."/>
            <person name="Rose D.J."/>
            <person name="Burland V."/>
            <person name="Kodoyianni V."/>
            <person name="Schwartz D.C."/>
            <person name="Blattner F.R."/>
        </authorList>
    </citation>
    <scope>NUCLEOTIDE SEQUENCE [LARGE SCALE GENOMIC DNA]</scope>
    <source>
        <strain>ATCC 700931 / Ty2</strain>
    </source>
</reference>
<accession>P59697</accession>
<accession>Q57334</accession>
<comment type="function">
    <text evidence="1">Transposase responsible for transposition of the IS200 insertion sequence (IS) element. Transposition occurs in 2 main steps, excision from the donor DNA 'top strand' into a single strand circle and its subsequent reinsertion into the DNA target. This increases the copy number of the IS.</text>
</comment>
<comment type="cofactor">
    <cofactor evidence="1">
        <name>Mg(2+)</name>
        <dbReference type="ChEBI" id="CHEBI:18420"/>
    </cofactor>
</comment>
<comment type="subunit">
    <text evidence="1">Homodimer.</text>
</comment>
<comment type="miscellaneous">
    <text evidence="2">Belongs to the IS200/IS605 insertion sequence (IS) element family.</text>
</comment>
<comment type="similarity">
    <text evidence="2">Belongs to the transposase 17 family.</text>
</comment>
<keyword id="KW-0233">DNA recombination</keyword>
<keyword id="KW-0238">DNA-binding</keyword>
<keyword id="KW-0255">Endonuclease</keyword>
<keyword id="KW-0378">Hydrolase</keyword>
<keyword id="KW-0460">Magnesium</keyword>
<keyword id="KW-0479">Metal-binding</keyword>
<keyword id="KW-0540">Nuclease</keyword>
<keyword id="KW-0814">Transposable element</keyword>
<keyword id="KW-0815">Transposition</keyword>